<protein>
    <recommendedName>
        <fullName>E3 ubiquitin-protein ligase IE2</fullName>
        <ecNumber>2.3.2.27</ecNumber>
    </recommendedName>
    <alternativeName>
        <fullName>Immediate-early protein IE2</fullName>
    </alternativeName>
    <alternativeName>
        <fullName>RING-type E3 ubiquitin transferase IE2</fullName>
    </alternativeName>
</protein>
<reference key="1">
    <citation type="journal article" date="2006" name="J. Gen. Virol.">
        <title>Gene organization and complete sequence of the Hyphantria cunea nucleopolyhedrovirus genome.</title>
        <authorList>
            <person name="Ikeda M."/>
            <person name="Shikata M."/>
            <person name="Shirata N."/>
            <person name="Chaeychomsri S."/>
            <person name="Kobayashi M."/>
        </authorList>
    </citation>
    <scope>NUCLEOTIDE SEQUENCE [LARGE SCALE GENOMIC DNA]</scope>
</reference>
<keyword id="KW-0175">Coiled coil</keyword>
<keyword id="KW-0244">Early protein</keyword>
<keyword id="KW-1048">Host nucleus</keyword>
<keyword id="KW-0945">Host-virus interaction</keyword>
<keyword id="KW-0479">Metal-binding</keyword>
<keyword id="KW-1128">Modulation of host ubiquitin pathway by viral E3 ligase</keyword>
<keyword id="KW-1130">Modulation of host ubiquitin pathway by virus</keyword>
<keyword id="KW-0808">Transferase</keyword>
<keyword id="KW-0832">Ubl conjugation</keyword>
<keyword id="KW-0833">Ubl conjugation pathway</keyword>
<keyword id="KW-0862">Zinc</keyword>
<keyword id="KW-0863">Zinc-finger</keyword>
<organism>
    <name type="scientific">Hyphantria cunea nuclear polyhedrosis virus</name>
    <name type="common">HcNPV</name>
    <dbReference type="NCBI Taxonomy" id="28288"/>
    <lineage>
        <taxon>Viruses</taxon>
        <taxon>Viruses incertae sedis</taxon>
        <taxon>Naldaviricetes</taxon>
        <taxon>Lefavirales</taxon>
        <taxon>Baculoviridae</taxon>
        <taxon>Alphabaculovirus</taxon>
        <taxon>Alphabaculovirus hycuneae</taxon>
    </lineage>
</organism>
<comment type="function">
    <text evidence="1">RING-finger E3 ubiquitin ligase that plays an important regulatory role during the initial stages of infection. Migrates to specific nuclear foci early in infection supposely to prepare the sites for viral replication by targeting and ubiquitinating host proteins.</text>
</comment>
<comment type="catalytic activity">
    <reaction>
        <text>S-ubiquitinyl-[E2 ubiquitin-conjugating enzyme]-L-cysteine + [acceptor protein]-L-lysine = [E2 ubiquitin-conjugating enzyme]-L-cysteine + N(6)-ubiquitinyl-[acceptor protein]-L-lysine.</text>
        <dbReference type="EC" id="2.3.2.27"/>
    </reaction>
</comment>
<comment type="subunit">
    <text evidence="1">Homooligomer.</text>
</comment>
<comment type="subcellular location">
    <subcellularLocation>
        <location evidence="1">Host nucleus</location>
    </subcellularLocation>
</comment>
<comment type="PTM">
    <text evidence="1">Auto-ubiquitinated.</text>
</comment>
<comment type="similarity">
    <text evidence="5">Belongs to the alphabaculovirus IE2 protein family.</text>
</comment>
<name>VIE2_NPVHC</name>
<accession>Q2NNU1</accession>
<organismHost>
    <name type="scientific">Lepidoptera</name>
    <name type="common">butterflies and moths</name>
    <dbReference type="NCBI Taxonomy" id="7088"/>
</organismHost>
<proteinExistence type="inferred from homology"/>
<sequence>MSRINNADTPTNRRNLSLARGRRRLTYSPSTPMPTPRQTRAPMPTPRQRRSLTPEHVVGDRNAPLRASYTINNSRYNVHGDAEFNPPEDDDDSIIFTDHAAEQARQRAVNLHESLTTTPRSPDYSPVHSPSGQVIDSDDYNSDDDERMLEQILLESAEPPQTPQPAPEPQEDVEVLCHICSCTFTDIKNYNSNFVTSSECNHAVCFKCYVSIVFNKEAYKCSICNRTTLTCRAYNRAGYVELSTVRTVRDNKLIKQHWMQLTESNMPHNRDKTIIEELQLELADLRATTARAHHEVNMIKSDNLLLQQQVDFKNLELQQELNAKVKLQKQNDTLSAANTFLQNQLDAQVAESKIKMDQFVRQHEAFLKKFKSSVM</sequence>
<evidence type="ECO:0000250" key="1">
    <source>
        <dbReference type="UniProtKB" id="O92503"/>
    </source>
</evidence>
<evidence type="ECO:0000255" key="2"/>
<evidence type="ECO:0000255" key="3">
    <source>
        <dbReference type="PROSITE-ProRule" id="PRU00175"/>
    </source>
</evidence>
<evidence type="ECO:0000256" key="4">
    <source>
        <dbReference type="SAM" id="MobiDB-lite"/>
    </source>
</evidence>
<evidence type="ECO:0000305" key="5"/>
<gene>
    <name type="primary">IE2</name>
    <name type="ORF">HynVgp006</name>
</gene>
<dbReference type="EC" id="2.3.2.27"/>
<dbReference type="EMBL" id="AP009046">
    <property type="protein sequence ID" value="BAE72295.1"/>
    <property type="molecule type" value="Genomic_DNA"/>
</dbReference>
<dbReference type="RefSeq" id="YP_473194.1">
    <property type="nucleotide sequence ID" value="NC_007767.1"/>
</dbReference>
<dbReference type="SMR" id="Q2NNU1"/>
<dbReference type="GeneID" id="3890554"/>
<dbReference type="KEGG" id="vg:3890554"/>
<dbReference type="OrthoDB" id="7654at10239"/>
<dbReference type="Proteomes" id="UP000202376">
    <property type="component" value="Genome"/>
</dbReference>
<dbReference type="GO" id="GO:0042025">
    <property type="term" value="C:host cell nucleus"/>
    <property type="evidence" value="ECO:0007669"/>
    <property type="project" value="UniProtKB-SubCell"/>
</dbReference>
<dbReference type="GO" id="GO:0016740">
    <property type="term" value="F:transferase activity"/>
    <property type="evidence" value="ECO:0007669"/>
    <property type="project" value="UniProtKB-KW"/>
</dbReference>
<dbReference type="GO" id="GO:0008270">
    <property type="term" value="F:zinc ion binding"/>
    <property type="evidence" value="ECO:0007669"/>
    <property type="project" value="UniProtKB-KW"/>
</dbReference>
<dbReference type="GO" id="GO:0039648">
    <property type="term" value="P:symbiont-mediated perturbation of host ubiquitin-like protein modification"/>
    <property type="evidence" value="ECO:0007669"/>
    <property type="project" value="UniProtKB-KW"/>
</dbReference>
<dbReference type="InterPro" id="IPR001841">
    <property type="entry name" value="Znf_RING"/>
</dbReference>
<dbReference type="InterPro" id="IPR017907">
    <property type="entry name" value="Znf_RING_CS"/>
</dbReference>
<dbReference type="SUPFAM" id="SSF57850">
    <property type="entry name" value="RING/U-box"/>
    <property type="match status" value="1"/>
</dbReference>
<dbReference type="PROSITE" id="PS00518">
    <property type="entry name" value="ZF_RING_1"/>
    <property type="match status" value="1"/>
</dbReference>
<dbReference type="PROSITE" id="PS50089">
    <property type="entry name" value="ZF_RING_2"/>
    <property type="match status" value="1"/>
</dbReference>
<feature type="chain" id="PRO_0000396078" description="E3 ubiquitin-protein ligase IE2">
    <location>
        <begin position="1"/>
        <end position="375"/>
    </location>
</feature>
<feature type="zinc finger region" description="RING-type" evidence="3">
    <location>
        <begin position="177"/>
        <end position="225"/>
    </location>
</feature>
<feature type="region of interest" description="Disordered" evidence="4">
    <location>
        <begin position="1"/>
        <end position="61"/>
    </location>
</feature>
<feature type="region of interest" description="Disordered" evidence="4">
    <location>
        <begin position="115"/>
        <end position="142"/>
    </location>
</feature>
<feature type="coiled-coil region" evidence="2">
    <location>
        <begin position="272"/>
        <end position="348"/>
    </location>
</feature>
<feature type="compositionally biased region" description="Polar residues" evidence="4">
    <location>
        <begin position="1"/>
        <end position="12"/>
    </location>
</feature>